<name>COAD_BRASO</name>
<dbReference type="EC" id="2.7.7.3" evidence="1"/>
<dbReference type="EMBL" id="CU234118">
    <property type="protein sequence ID" value="CAL77749.1"/>
    <property type="molecule type" value="Genomic_DNA"/>
</dbReference>
<dbReference type="RefSeq" id="WP_011926884.1">
    <property type="nucleotide sequence ID" value="NC_009445.1"/>
</dbReference>
<dbReference type="SMR" id="A4YV23"/>
<dbReference type="STRING" id="114615.BRADO3997"/>
<dbReference type="KEGG" id="bra:BRADO3997"/>
<dbReference type="eggNOG" id="COG0669">
    <property type="taxonomic scope" value="Bacteria"/>
</dbReference>
<dbReference type="HOGENOM" id="CLU_100149_0_1_5"/>
<dbReference type="OrthoDB" id="9806661at2"/>
<dbReference type="UniPathway" id="UPA00241">
    <property type="reaction ID" value="UER00355"/>
</dbReference>
<dbReference type="Proteomes" id="UP000001994">
    <property type="component" value="Chromosome"/>
</dbReference>
<dbReference type="GO" id="GO:0005737">
    <property type="term" value="C:cytoplasm"/>
    <property type="evidence" value="ECO:0007669"/>
    <property type="project" value="UniProtKB-SubCell"/>
</dbReference>
<dbReference type="GO" id="GO:0005524">
    <property type="term" value="F:ATP binding"/>
    <property type="evidence" value="ECO:0007669"/>
    <property type="project" value="UniProtKB-KW"/>
</dbReference>
<dbReference type="GO" id="GO:0004595">
    <property type="term" value="F:pantetheine-phosphate adenylyltransferase activity"/>
    <property type="evidence" value="ECO:0007669"/>
    <property type="project" value="UniProtKB-UniRule"/>
</dbReference>
<dbReference type="GO" id="GO:0015937">
    <property type="term" value="P:coenzyme A biosynthetic process"/>
    <property type="evidence" value="ECO:0007669"/>
    <property type="project" value="UniProtKB-UniRule"/>
</dbReference>
<dbReference type="CDD" id="cd02163">
    <property type="entry name" value="PPAT"/>
    <property type="match status" value="1"/>
</dbReference>
<dbReference type="Gene3D" id="3.40.50.620">
    <property type="entry name" value="HUPs"/>
    <property type="match status" value="1"/>
</dbReference>
<dbReference type="HAMAP" id="MF_00151">
    <property type="entry name" value="PPAT_bact"/>
    <property type="match status" value="1"/>
</dbReference>
<dbReference type="InterPro" id="IPR004821">
    <property type="entry name" value="Cyt_trans-like"/>
</dbReference>
<dbReference type="InterPro" id="IPR001980">
    <property type="entry name" value="PPAT"/>
</dbReference>
<dbReference type="InterPro" id="IPR014729">
    <property type="entry name" value="Rossmann-like_a/b/a_fold"/>
</dbReference>
<dbReference type="NCBIfam" id="TIGR01510">
    <property type="entry name" value="coaD_prev_kdtB"/>
    <property type="match status" value="1"/>
</dbReference>
<dbReference type="NCBIfam" id="TIGR00125">
    <property type="entry name" value="cyt_tran_rel"/>
    <property type="match status" value="1"/>
</dbReference>
<dbReference type="PANTHER" id="PTHR21342">
    <property type="entry name" value="PHOSPHOPANTETHEINE ADENYLYLTRANSFERASE"/>
    <property type="match status" value="1"/>
</dbReference>
<dbReference type="PANTHER" id="PTHR21342:SF1">
    <property type="entry name" value="PHOSPHOPANTETHEINE ADENYLYLTRANSFERASE"/>
    <property type="match status" value="1"/>
</dbReference>
<dbReference type="Pfam" id="PF01467">
    <property type="entry name" value="CTP_transf_like"/>
    <property type="match status" value="1"/>
</dbReference>
<dbReference type="PRINTS" id="PR01020">
    <property type="entry name" value="LPSBIOSNTHSS"/>
</dbReference>
<dbReference type="SUPFAM" id="SSF52374">
    <property type="entry name" value="Nucleotidylyl transferase"/>
    <property type="match status" value="1"/>
</dbReference>
<reference key="1">
    <citation type="journal article" date="2007" name="Science">
        <title>Legumes symbioses: absence of nod genes in photosynthetic bradyrhizobia.</title>
        <authorList>
            <person name="Giraud E."/>
            <person name="Moulin L."/>
            <person name="Vallenet D."/>
            <person name="Barbe V."/>
            <person name="Cytryn E."/>
            <person name="Avarre J.-C."/>
            <person name="Jaubert M."/>
            <person name="Simon D."/>
            <person name="Cartieaux F."/>
            <person name="Prin Y."/>
            <person name="Bena G."/>
            <person name="Hannibal L."/>
            <person name="Fardoux J."/>
            <person name="Kojadinovic M."/>
            <person name="Vuillet L."/>
            <person name="Lajus A."/>
            <person name="Cruveiller S."/>
            <person name="Rouy Z."/>
            <person name="Mangenot S."/>
            <person name="Segurens B."/>
            <person name="Dossat C."/>
            <person name="Franck W.L."/>
            <person name="Chang W.-S."/>
            <person name="Saunders E."/>
            <person name="Bruce D."/>
            <person name="Richardson P."/>
            <person name="Normand P."/>
            <person name="Dreyfus B."/>
            <person name="Pignol D."/>
            <person name="Stacey G."/>
            <person name="Emerich D."/>
            <person name="Vermeglio A."/>
            <person name="Medigue C."/>
            <person name="Sadowsky M."/>
        </authorList>
    </citation>
    <scope>NUCLEOTIDE SEQUENCE [LARGE SCALE GENOMIC DNA]</scope>
    <source>
        <strain>ORS 278</strain>
    </source>
</reference>
<accession>A4YV23</accession>
<sequence>MQRIALYPGSFDPVTNGHLDVVRQAVHLCDKLIVAVGVHHGKKPLFSTEERLAMAHEVFGPVASAAGCAFDASTYDNLTVTAAQQAGAILMIRGLRDGTDLDYEMQLAGMNQTMAPSIQTVFVPASVPVRPITASLVRQIAAMGGEISHFVPPSVVAPLKAKFA</sequence>
<feature type="chain" id="PRO_1000011099" description="Phosphopantetheine adenylyltransferase">
    <location>
        <begin position="1"/>
        <end position="164"/>
    </location>
</feature>
<feature type="binding site" evidence="1">
    <location>
        <begin position="10"/>
        <end position="11"/>
    </location>
    <ligand>
        <name>ATP</name>
        <dbReference type="ChEBI" id="CHEBI:30616"/>
    </ligand>
</feature>
<feature type="binding site" evidence="1">
    <location>
        <position position="10"/>
    </location>
    <ligand>
        <name>substrate</name>
    </ligand>
</feature>
<feature type="binding site" evidence="1">
    <location>
        <position position="18"/>
    </location>
    <ligand>
        <name>ATP</name>
        <dbReference type="ChEBI" id="CHEBI:30616"/>
    </ligand>
</feature>
<feature type="binding site" evidence="1">
    <location>
        <position position="42"/>
    </location>
    <ligand>
        <name>substrate</name>
    </ligand>
</feature>
<feature type="binding site" evidence="1">
    <location>
        <position position="79"/>
    </location>
    <ligand>
        <name>substrate</name>
    </ligand>
</feature>
<feature type="binding site" evidence="1">
    <location>
        <position position="93"/>
    </location>
    <ligand>
        <name>substrate</name>
    </ligand>
</feature>
<feature type="binding site" evidence="1">
    <location>
        <begin position="94"/>
        <end position="96"/>
    </location>
    <ligand>
        <name>ATP</name>
        <dbReference type="ChEBI" id="CHEBI:30616"/>
    </ligand>
</feature>
<feature type="binding site" evidence="1">
    <location>
        <position position="104"/>
    </location>
    <ligand>
        <name>ATP</name>
        <dbReference type="ChEBI" id="CHEBI:30616"/>
    </ligand>
</feature>
<feature type="binding site" evidence="1">
    <location>
        <begin position="129"/>
        <end position="135"/>
    </location>
    <ligand>
        <name>ATP</name>
        <dbReference type="ChEBI" id="CHEBI:30616"/>
    </ligand>
</feature>
<feature type="site" description="Transition state stabilizer" evidence="1">
    <location>
        <position position="18"/>
    </location>
</feature>
<evidence type="ECO:0000255" key="1">
    <source>
        <dbReference type="HAMAP-Rule" id="MF_00151"/>
    </source>
</evidence>
<protein>
    <recommendedName>
        <fullName evidence="1">Phosphopantetheine adenylyltransferase</fullName>
        <ecNumber evidence="1">2.7.7.3</ecNumber>
    </recommendedName>
    <alternativeName>
        <fullName evidence="1">Dephospho-CoA pyrophosphorylase</fullName>
    </alternativeName>
    <alternativeName>
        <fullName evidence="1">Pantetheine-phosphate adenylyltransferase</fullName>
        <shortName evidence="1">PPAT</shortName>
    </alternativeName>
</protein>
<proteinExistence type="inferred from homology"/>
<organism>
    <name type="scientific">Bradyrhizobium sp. (strain ORS 278)</name>
    <dbReference type="NCBI Taxonomy" id="114615"/>
    <lineage>
        <taxon>Bacteria</taxon>
        <taxon>Pseudomonadati</taxon>
        <taxon>Pseudomonadota</taxon>
        <taxon>Alphaproteobacteria</taxon>
        <taxon>Hyphomicrobiales</taxon>
        <taxon>Nitrobacteraceae</taxon>
        <taxon>Bradyrhizobium</taxon>
    </lineage>
</organism>
<keyword id="KW-0067">ATP-binding</keyword>
<keyword id="KW-0173">Coenzyme A biosynthesis</keyword>
<keyword id="KW-0963">Cytoplasm</keyword>
<keyword id="KW-0460">Magnesium</keyword>
<keyword id="KW-0547">Nucleotide-binding</keyword>
<keyword id="KW-0548">Nucleotidyltransferase</keyword>
<keyword id="KW-1185">Reference proteome</keyword>
<keyword id="KW-0808">Transferase</keyword>
<gene>
    <name evidence="1" type="primary">coaD</name>
    <name type="ordered locus">BRADO3997</name>
</gene>
<comment type="function">
    <text evidence="1">Reversibly transfers an adenylyl group from ATP to 4'-phosphopantetheine, yielding dephospho-CoA (dPCoA) and pyrophosphate.</text>
</comment>
<comment type="catalytic activity">
    <reaction evidence="1">
        <text>(R)-4'-phosphopantetheine + ATP + H(+) = 3'-dephospho-CoA + diphosphate</text>
        <dbReference type="Rhea" id="RHEA:19801"/>
        <dbReference type="ChEBI" id="CHEBI:15378"/>
        <dbReference type="ChEBI" id="CHEBI:30616"/>
        <dbReference type="ChEBI" id="CHEBI:33019"/>
        <dbReference type="ChEBI" id="CHEBI:57328"/>
        <dbReference type="ChEBI" id="CHEBI:61723"/>
        <dbReference type="EC" id="2.7.7.3"/>
    </reaction>
</comment>
<comment type="cofactor">
    <cofactor evidence="1">
        <name>Mg(2+)</name>
        <dbReference type="ChEBI" id="CHEBI:18420"/>
    </cofactor>
</comment>
<comment type="pathway">
    <text evidence="1">Cofactor biosynthesis; coenzyme A biosynthesis; CoA from (R)-pantothenate: step 4/5.</text>
</comment>
<comment type="subunit">
    <text evidence="1">Homohexamer.</text>
</comment>
<comment type="subcellular location">
    <subcellularLocation>
        <location evidence="1">Cytoplasm</location>
    </subcellularLocation>
</comment>
<comment type="similarity">
    <text evidence="1">Belongs to the bacterial CoaD family.</text>
</comment>